<keyword id="KW-0001">2Fe-2S</keyword>
<keyword id="KW-0963">Cytoplasm</keyword>
<keyword id="KW-0274">FAD</keyword>
<keyword id="KW-0285">Flavoprotein</keyword>
<keyword id="KW-0408">Iron</keyword>
<keyword id="KW-0411">Iron-sulfur</keyword>
<keyword id="KW-0479">Metal-binding</keyword>
<keyword id="KW-0500">Molybdenum</keyword>
<keyword id="KW-0560">Oxidoreductase</keyword>
<keyword id="KW-0597">Phosphoprotein</keyword>
<keyword id="KW-1185">Reference proteome</keyword>
<accession>Q5QE80</accession>
<dbReference type="EC" id="1.2.3.1"/>
<dbReference type="EC" id="1.17.3.-"/>
<dbReference type="EMBL" id="AY665586">
    <property type="protein sequence ID" value="AAV68253.1"/>
    <property type="molecule type" value="mRNA"/>
</dbReference>
<dbReference type="RefSeq" id="NP_001008527.1">
    <property type="nucleotide sequence ID" value="NM_001008527.1"/>
</dbReference>
<dbReference type="SMR" id="Q5QE80"/>
<dbReference type="FunCoup" id="Q5QE80">
    <property type="interactions" value="113"/>
</dbReference>
<dbReference type="STRING" id="10116.ENSRNOP00000072046"/>
<dbReference type="iPTMnet" id="Q5QE80"/>
<dbReference type="PhosphoSitePlus" id="Q5QE80"/>
<dbReference type="GeneID" id="493909"/>
<dbReference type="KEGG" id="rno:493909"/>
<dbReference type="UCSC" id="RGD:1359328">
    <property type="organism name" value="rat"/>
</dbReference>
<dbReference type="AGR" id="RGD:1359328"/>
<dbReference type="CTD" id="71724"/>
<dbReference type="RGD" id="1359328">
    <property type="gene designation" value="Aox3"/>
</dbReference>
<dbReference type="InParanoid" id="Q5QE80"/>
<dbReference type="PhylomeDB" id="Q5QE80"/>
<dbReference type="BRENDA" id="1.2.3.1">
    <property type="organism ID" value="5301"/>
</dbReference>
<dbReference type="PRO" id="PR:Q5QE80"/>
<dbReference type="Proteomes" id="UP000002494">
    <property type="component" value="Unplaced"/>
</dbReference>
<dbReference type="GO" id="GO:0005829">
    <property type="term" value="C:cytosol"/>
    <property type="evidence" value="ECO:0000250"/>
    <property type="project" value="UniProtKB"/>
</dbReference>
<dbReference type="GO" id="GO:0051537">
    <property type="term" value="F:2 iron, 2 sulfur cluster binding"/>
    <property type="evidence" value="ECO:0000250"/>
    <property type="project" value="UniProtKB"/>
</dbReference>
<dbReference type="GO" id="GO:0004031">
    <property type="term" value="F:aldehyde oxidase activity"/>
    <property type="evidence" value="ECO:0000250"/>
    <property type="project" value="UniProtKB"/>
</dbReference>
<dbReference type="GO" id="GO:0071949">
    <property type="term" value="F:FAD binding"/>
    <property type="evidence" value="ECO:0007669"/>
    <property type="project" value="InterPro"/>
</dbReference>
<dbReference type="GO" id="GO:0050660">
    <property type="term" value="F:flavin adenine dinucleotide binding"/>
    <property type="evidence" value="ECO:0000250"/>
    <property type="project" value="UniProtKB"/>
</dbReference>
<dbReference type="GO" id="GO:0005506">
    <property type="term" value="F:iron ion binding"/>
    <property type="evidence" value="ECO:0000250"/>
    <property type="project" value="UniProtKB"/>
</dbReference>
<dbReference type="GO" id="GO:0043546">
    <property type="term" value="F:molybdopterin cofactor binding"/>
    <property type="evidence" value="ECO:0000250"/>
    <property type="project" value="UniProtKB"/>
</dbReference>
<dbReference type="GO" id="GO:0051287">
    <property type="term" value="F:NAD binding"/>
    <property type="evidence" value="ECO:0007669"/>
    <property type="project" value="InterPro"/>
</dbReference>
<dbReference type="GO" id="GO:0042803">
    <property type="term" value="F:protein homodimerization activity"/>
    <property type="evidence" value="ECO:0000250"/>
    <property type="project" value="UniProtKB"/>
</dbReference>
<dbReference type="GO" id="GO:0006805">
    <property type="term" value="P:xenobiotic metabolic process"/>
    <property type="evidence" value="ECO:0000250"/>
    <property type="project" value="UniProtKB"/>
</dbReference>
<dbReference type="FunFam" id="1.10.150.120:FF:000001">
    <property type="entry name" value="Aldehyde oxidase 1"/>
    <property type="match status" value="1"/>
</dbReference>
<dbReference type="FunFam" id="3.10.20.30:FF:000015">
    <property type="entry name" value="Aldehyde oxidase 1"/>
    <property type="match status" value="1"/>
</dbReference>
<dbReference type="FunFam" id="3.30.365.10:FF:000003">
    <property type="entry name" value="Aldehyde oxidase 1"/>
    <property type="match status" value="1"/>
</dbReference>
<dbReference type="FunFam" id="3.90.1170.50:FF:000001">
    <property type="entry name" value="Aldehyde oxidase 1"/>
    <property type="match status" value="1"/>
</dbReference>
<dbReference type="FunFam" id="3.30.365.10:FF:000025">
    <property type="entry name" value="Aldehyde oxidase 4"/>
    <property type="match status" value="1"/>
</dbReference>
<dbReference type="FunFam" id="3.30.365.10:FF:000001">
    <property type="entry name" value="Xanthine dehydrogenase oxidase"/>
    <property type="match status" value="1"/>
</dbReference>
<dbReference type="FunFam" id="3.30.365.10:FF:000004">
    <property type="entry name" value="Xanthine dehydrogenase oxidase"/>
    <property type="match status" value="1"/>
</dbReference>
<dbReference type="FunFam" id="3.30.390.50:FF:000001">
    <property type="entry name" value="Xanthine dehydrogenase oxidase"/>
    <property type="match status" value="1"/>
</dbReference>
<dbReference type="FunFam" id="3.30.43.10:FF:000001">
    <property type="entry name" value="Xanthine dehydrogenase/oxidase"/>
    <property type="match status" value="1"/>
</dbReference>
<dbReference type="FunFam" id="3.30.465.10:FF:000004">
    <property type="entry name" value="Xanthine dehydrogenase/oxidase"/>
    <property type="match status" value="1"/>
</dbReference>
<dbReference type="Gene3D" id="3.10.20.30">
    <property type="match status" value="1"/>
</dbReference>
<dbReference type="Gene3D" id="3.30.465.10">
    <property type="match status" value="1"/>
</dbReference>
<dbReference type="Gene3D" id="1.10.150.120">
    <property type="entry name" value="[2Fe-2S]-binding domain"/>
    <property type="match status" value="1"/>
</dbReference>
<dbReference type="Gene3D" id="3.90.1170.50">
    <property type="entry name" value="Aldehyde oxidase/xanthine dehydrogenase, a/b hammerhead"/>
    <property type="match status" value="1"/>
</dbReference>
<dbReference type="Gene3D" id="3.30.365.10">
    <property type="entry name" value="Aldehyde oxidase/xanthine dehydrogenase, molybdopterin binding domain"/>
    <property type="match status" value="4"/>
</dbReference>
<dbReference type="Gene3D" id="3.30.390.50">
    <property type="entry name" value="CO dehydrogenase flavoprotein, C-terminal domain"/>
    <property type="match status" value="1"/>
</dbReference>
<dbReference type="Gene3D" id="3.30.43.10">
    <property type="entry name" value="Uridine Diphospho-n-acetylenolpyruvylglucosamine Reductase, domain 2"/>
    <property type="match status" value="1"/>
</dbReference>
<dbReference type="InterPro" id="IPR002888">
    <property type="entry name" value="2Fe-2S-bd"/>
</dbReference>
<dbReference type="InterPro" id="IPR036884">
    <property type="entry name" value="2Fe-2S-bd_dom_sf"/>
</dbReference>
<dbReference type="InterPro" id="IPR036010">
    <property type="entry name" value="2Fe-2S_ferredoxin-like_sf"/>
</dbReference>
<dbReference type="InterPro" id="IPR001041">
    <property type="entry name" value="2Fe-2S_ferredoxin-type"/>
</dbReference>
<dbReference type="InterPro" id="IPR006058">
    <property type="entry name" value="2Fe2S_fd_BS"/>
</dbReference>
<dbReference type="InterPro" id="IPR000674">
    <property type="entry name" value="Ald_Oxase/Xan_DH_a/b"/>
</dbReference>
<dbReference type="InterPro" id="IPR036856">
    <property type="entry name" value="Ald_Oxase/Xan_DH_a/b_sf"/>
</dbReference>
<dbReference type="InterPro" id="IPR016208">
    <property type="entry name" value="Ald_Oxase/xanthine_DH-like"/>
</dbReference>
<dbReference type="InterPro" id="IPR014313">
    <property type="entry name" value="Aldehyde_oxidase"/>
</dbReference>
<dbReference type="InterPro" id="IPR008274">
    <property type="entry name" value="AldOxase/xan_DH_MoCoBD1"/>
</dbReference>
<dbReference type="InterPro" id="IPR046867">
    <property type="entry name" value="AldOxase/xan_DH_MoCoBD2"/>
</dbReference>
<dbReference type="InterPro" id="IPR037165">
    <property type="entry name" value="AldOxase/xan_DH_Mopterin-bd_sf"/>
</dbReference>
<dbReference type="InterPro" id="IPR012675">
    <property type="entry name" value="Beta-grasp_dom_sf"/>
</dbReference>
<dbReference type="InterPro" id="IPR005107">
    <property type="entry name" value="CO_DH_flav_C"/>
</dbReference>
<dbReference type="InterPro" id="IPR036683">
    <property type="entry name" value="CO_DH_flav_C_dom_sf"/>
</dbReference>
<dbReference type="InterPro" id="IPR016166">
    <property type="entry name" value="FAD-bd_PCMH"/>
</dbReference>
<dbReference type="InterPro" id="IPR036318">
    <property type="entry name" value="FAD-bd_PCMH-like_sf"/>
</dbReference>
<dbReference type="InterPro" id="IPR016167">
    <property type="entry name" value="FAD-bd_PCMH_sub1"/>
</dbReference>
<dbReference type="InterPro" id="IPR016169">
    <property type="entry name" value="FAD-bd_PCMH_sub2"/>
</dbReference>
<dbReference type="InterPro" id="IPR002346">
    <property type="entry name" value="Mopterin_DH_FAD-bd"/>
</dbReference>
<dbReference type="NCBIfam" id="TIGR02969">
    <property type="entry name" value="mam_aldehyde_ox"/>
    <property type="match status" value="1"/>
</dbReference>
<dbReference type="PANTHER" id="PTHR45444">
    <property type="entry name" value="XANTHINE DEHYDROGENASE"/>
    <property type="match status" value="1"/>
</dbReference>
<dbReference type="PANTHER" id="PTHR45444:SF3">
    <property type="entry name" value="XANTHINE DEHYDROGENASE"/>
    <property type="match status" value="1"/>
</dbReference>
<dbReference type="Pfam" id="PF01315">
    <property type="entry name" value="Ald_Xan_dh_C"/>
    <property type="match status" value="1"/>
</dbReference>
<dbReference type="Pfam" id="PF03450">
    <property type="entry name" value="CO_deh_flav_C"/>
    <property type="match status" value="1"/>
</dbReference>
<dbReference type="Pfam" id="PF00941">
    <property type="entry name" value="FAD_binding_5"/>
    <property type="match status" value="1"/>
</dbReference>
<dbReference type="Pfam" id="PF00111">
    <property type="entry name" value="Fer2"/>
    <property type="match status" value="1"/>
</dbReference>
<dbReference type="Pfam" id="PF01799">
    <property type="entry name" value="Fer2_2"/>
    <property type="match status" value="1"/>
</dbReference>
<dbReference type="Pfam" id="PF02738">
    <property type="entry name" value="MoCoBD_1"/>
    <property type="match status" value="1"/>
</dbReference>
<dbReference type="Pfam" id="PF20256">
    <property type="entry name" value="MoCoBD_2"/>
    <property type="match status" value="1"/>
</dbReference>
<dbReference type="PIRSF" id="PIRSF000127">
    <property type="entry name" value="Xanthine_DH"/>
    <property type="match status" value="1"/>
</dbReference>
<dbReference type="SMART" id="SM01008">
    <property type="entry name" value="Ald_Xan_dh_C"/>
    <property type="match status" value="1"/>
</dbReference>
<dbReference type="SMART" id="SM01092">
    <property type="entry name" value="CO_deh_flav_C"/>
    <property type="match status" value="1"/>
</dbReference>
<dbReference type="SUPFAM" id="SSF54292">
    <property type="entry name" value="2Fe-2S ferredoxin-like"/>
    <property type="match status" value="1"/>
</dbReference>
<dbReference type="SUPFAM" id="SSF55447">
    <property type="entry name" value="CO dehydrogenase flavoprotein C-terminal domain-like"/>
    <property type="match status" value="1"/>
</dbReference>
<dbReference type="SUPFAM" id="SSF47741">
    <property type="entry name" value="CO dehydrogenase ISP C-domain like"/>
    <property type="match status" value="1"/>
</dbReference>
<dbReference type="SUPFAM" id="SSF54665">
    <property type="entry name" value="CO dehydrogenase molybdoprotein N-domain-like"/>
    <property type="match status" value="1"/>
</dbReference>
<dbReference type="SUPFAM" id="SSF56176">
    <property type="entry name" value="FAD-binding/transporter-associated domain-like"/>
    <property type="match status" value="1"/>
</dbReference>
<dbReference type="SUPFAM" id="SSF56003">
    <property type="entry name" value="Molybdenum cofactor-binding domain"/>
    <property type="match status" value="1"/>
</dbReference>
<dbReference type="PROSITE" id="PS00197">
    <property type="entry name" value="2FE2S_FER_1"/>
    <property type="match status" value="1"/>
</dbReference>
<dbReference type="PROSITE" id="PS51085">
    <property type="entry name" value="2FE2S_FER_2"/>
    <property type="match status" value="1"/>
</dbReference>
<dbReference type="PROSITE" id="PS51387">
    <property type="entry name" value="FAD_PCMH"/>
    <property type="match status" value="1"/>
</dbReference>
<protein>
    <recommendedName>
        <fullName>Aldehyde oxidase 3</fullName>
        <ecNumber>1.2.3.1</ecNumber>
    </recommendedName>
    <alternativeName>
        <fullName>Aldehyde oxidase homolog 1</fullName>
    </alternativeName>
    <alternativeName>
        <fullName>Azaheterocycle hydroxylase 3</fullName>
        <ecNumber>1.17.3.-</ecNumber>
    </alternativeName>
</protein>
<name>AOXC_RAT</name>
<proteinExistence type="evidence at protein level"/>
<organism>
    <name type="scientific">Rattus norvegicus</name>
    <name type="common">Rat</name>
    <dbReference type="NCBI Taxonomy" id="10116"/>
    <lineage>
        <taxon>Eukaryota</taxon>
        <taxon>Metazoa</taxon>
        <taxon>Chordata</taxon>
        <taxon>Craniata</taxon>
        <taxon>Vertebrata</taxon>
        <taxon>Euteleostomi</taxon>
        <taxon>Mammalia</taxon>
        <taxon>Eutheria</taxon>
        <taxon>Euarchontoglires</taxon>
        <taxon>Glires</taxon>
        <taxon>Rodentia</taxon>
        <taxon>Myomorpha</taxon>
        <taxon>Muroidea</taxon>
        <taxon>Muridae</taxon>
        <taxon>Murinae</taxon>
        <taxon>Rattus</taxon>
    </lineage>
</organism>
<sequence length="1334" mass="146751">MSRSKESDELIFFVNGKKVIERNADPEVNLLFYLRKIIQLTGTKYGCGGGDCGACTVMISRYNPISKKISHFSAAACLVPICSLHGAAVTTVEGIGSTKTRIHPVQERIAKGHGTQCGFCTPGMVMSIYTLLRNHPEPSTEQIMETLGGNLCRCTGYRPIVESARSFSPNSACCPMNEKWKCCLDEGKNEPERKNSVCTKLYEKEEFQPLDPTQELIFPPELMRMAEDSPNTVLTFRGERTTWIAPGTLNDLLELKMEYPSAPLVIGNTCLGLDMKFKDVSYPIIISPARILELFVVTNTNEGLTLGAGLSLTQVKNILSDVVSRLPKERTQTYRALLKHLRTLAGQQIRNVASLGGHIISRLPTSDLNPIFGVGNCKLNVASTEGTQQIPLNDHFLAGVPEAILKPEQVLISVFVPLSRKWEFVSAFRQAPRQQNAFAIVNAGMRVAFKEDTNTITDLSILYGGIGATVVSAKSCQQLIGRCWDEEMLDDAGRMIREEVSLLTAAPGGMVEYRKTLAISFLFKFYLDVLKQLKRRNPHRCPDISQKLLQVLEDFPLTMPHGTQSFKDVDSQQPLQDQSGRPIMHQSGIKHATGEAVFCDDMSVLAGELFLAVVTSSKPHARIISLDASEALASPGVVDVITAQDVPGDNGREEESLYAQDEVICVGQIVCAVAADSYARAKQATKKVKIVYEDMEPMIVTVQDALQHESFIGPEKKLEQGNVQLAFQSADQILEGEVHLGGQEHFYMETQSVRVIPKGEDMEMDIYVSSQDAAFTQEMVARTLGIPKNRITCHVKRVGGGFGGKTSKPGLLASVAAVAAQKTGRPIRFILERGDDMLITGGRHPLLGKYRVGFMNNGKIKAADIQLYINGGCTPDDSELVIEYALLKLENAYKIPNLRVRGRVCKTNLPSNTAFRGFGFPQGAFVTGTWVSAVAAKCHLPPEKVRELNMYKTIDRTIHKQEFDPTNLIKCWETCMENSSYYSRKKAVDEFNQQSFWKKRGIAIIPMKFSVGFPKTFYHQAAALVQIYTDGSVLVAHGGVELGQGINTKMIQVASRELKIPMSYIHLDEMNTMTVPNTITTGGSTGADVNGRAVQNACQILMKRLEPIISQNPNGDWEEWINEAFIQSISLSATGYFRGYQADMDWEKGEGDIYPYFVFGAACSEVEIDCLTGAHKNIRTDIVMDGSFSINPAVDIGQIEGAFVQGLGLYTLEELKYSPEGVLYTRGPHQYKIASVSDIPEEFHVSLLTPTQNPKAIYSSKGLGEAGMFLGSSVFFAIAAAVAAARKERGLPLILAINSPATAEVIRMACEDQFTNLVPKTDSKCCKPWSIPVA</sequence>
<evidence type="ECO:0000250" key="1">
    <source>
        <dbReference type="UniProtKB" id="G3X982"/>
    </source>
</evidence>
<evidence type="ECO:0000255" key="2">
    <source>
        <dbReference type="PROSITE-ProRule" id="PRU00465"/>
    </source>
</evidence>
<evidence type="ECO:0000255" key="3">
    <source>
        <dbReference type="PROSITE-ProRule" id="PRU00718"/>
    </source>
</evidence>
<evidence type="ECO:0000269" key="4">
    <source>
    </source>
</evidence>
<evidence type="ECO:0000269" key="5">
    <source>
    </source>
</evidence>
<evidence type="ECO:0000305" key="6"/>
<evidence type="ECO:0000305" key="7">
    <source>
    </source>
</evidence>
<evidence type="ECO:0007744" key="8">
    <source>
    </source>
</evidence>
<gene>
    <name type="primary">Aox3</name>
    <name type="synonym">Aoh1</name>
</gene>
<reference key="1">
    <citation type="journal article" date="2004" name="J. Biol. Chem.">
        <title>The aldehyde oxidase gene cluster in mice and rats. Aldehyde oxidase homologue 3, a novel member of the molybdo-flavoenzyme family with selective expression in the olfactory mucosa.</title>
        <authorList>
            <person name="Kurosaki M."/>
            <person name="Terao M."/>
            <person name="Barzago M.M."/>
            <person name="Bastone A."/>
            <person name="Bernardinello D."/>
            <person name="Salmona M."/>
            <person name="Garattini E."/>
        </authorList>
    </citation>
    <scope>NUCLEOTIDE SEQUENCE [MRNA]</scope>
    <source>
        <strain>CD Charles River</strain>
    </source>
</reference>
<reference key="2">
    <citation type="journal article" date="2007" name="Arch. Biochem. Biophys.">
        <title>Characterization of superoxide production from aldehyde oxidase: an important source of oxidants in biological tissues.</title>
        <authorList>
            <person name="Kundu T.K."/>
            <person name="Hille R."/>
            <person name="Velayutham M."/>
            <person name="Zweier J.L."/>
        </authorList>
    </citation>
    <scope>FUNCTION IN SUPEROXIDE PRODUCTION</scope>
    <scope>TISSUE SPECIFICITY</scope>
    <scope>SUBCELLULAR LOCATION</scope>
    <scope>HOMODIMER</scope>
    <scope>COFACTOR</scope>
</reference>
<reference key="3">
    <citation type="journal article" date="2009" name="J. Biol. Chem.">
        <title>Characterization of the magnitude and mechanism of aldehyde oxidase-mediated nitric oxide production from nitrite.</title>
        <authorList>
            <person name="Li H."/>
            <person name="Kundu T.K."/>
            <person name="Zweier J.L."/>
        </authorList>
    </citation>
    <scope>FUNCTION IN NITRIC OXIDE PRODUCTION</scope>
    <scope>BIOPHYSICOCHEMICAL PROPERTIES</scope>
    <scope>ACTIVITY REGULATION</scope>
</reference>
<reference key="4">
    <citation type="journal article" date="2012" name="Nat. Commun.">
        <title>Quantitative maps of protein phosphorylation sites across 14 different rat organs and tissues.</title>
        <authorList>
            <person name="Lundby A."/>
            <person name="Secher A."/>
            <person name="Lage K."/>
            <person name="Nordsborg N.B."/>
            <person name="Dmytriyev A."/>
            <person name="Lundby C."/>
            <person name="Olsen J.V."/>
        </authorList>
    </citation>
    <scope>PHOSPHORYLATION [LARGE SCALE ANALYSIS] AT SER-320</scope>
    <scope>IDENTIFICATION BY MASS SPECTROMETRY [LARGE SCALE ANALYSIS]</scope>
</reference>
<reference key="5">
    <citation type="journal article" date="2013" name="Cell. Mol. Life Sci.">
        <title>Structure and evolution of vertebrate aldehyde oxidases: from gene duplication to gene suppression.</title>
        <authorList>
            <person name="Kurosaki M."/>
            <person name="Bolis M."/>
            <person name="Fratelli M."/>
            <person name="Barzago M.M."/>
            <person name="Pattini L."/>
            <person name="Perretta G."/>
            <person name="Terao M."/>
            <person name="Garattini E."/>
        </authorList>
    </citation>
    <scope>IDENTIFICATION OF PARALOGS</scope>
</reference>
<comment type="function">
    <text evidence="4 5">Oxidase with broad substrate specificity, oxidizing aromatic azaheterocycles, such as N1-methylnicotinamide and phthalazine, as well as aldehydes, such as benzaldehyde, retinal and pyridoxal. Plays a key role in the metabolism of xenobiotics and drugs containing aromatic azaheterocyclic substituents. Is probably involved in the regulation of reactive oxygen species homeostasis. Is a prominent source of superoxide generation via the one-electron reduction of molecular oxygen. Also catalyzes nitric oxide (NO) production; under anaerobic conditions, reduces nitrite to NO with NADH or aldehyde as electron donor, but under aerobic conditions, NADH is the preferred substrate. These reactions may be catalyzed by several isozymes.</text>
</comment>
<comment type="catalytic activity">
    <reaction>
        <text>an aldehyde + O2 + H2O = a carboxylate + H2O2 + H(+)</text>
        <dbReference type="Rhea" id="RHEA:16829"/>
        <dbReference type="ChEBI" id="CHEBI:15377"/>
        <dbReference type="ChEBI" id="CHEBI:15378"/>
        <dbReference type="ChEBI" id="CHEBI:15379"/>
        <dbReference type="ChEBI" id="CHEBI:16240"/>
        <dbReference type="ChEBI" id="CHEBI:17478"/>
        <dbReference type="ChEBI" id="CHEBI:29067"/>
        <dbReference type="EC" id="1.2.3.1"/>
    </reaction>
</comment>
<comment type="cofactor">
    <cofactor evidence="4">
        <name>[2Fe-2S] cluster</name>
        <dbReference type="ChEBI" id="CHEBI:190135"/>
    </cofactor>
    <text evidence="4">Binds 2 [2Fe-2S] clusters per subunit.</text>
</comment>
<comment type="cofactor">
    <cofactor evidence="4">
        <name>FAD</name>
        <dbReference type="ChEBI" id="CHEBI:57692"/>
    </cofactor>
    <text evidence="4">Binds 1 FAD per subunit.</text>
</comment>
<comment type="cofactor">
    <cofactor evidence="1">
        <name>Mo-molybdopterin</name>
        <dbReference type="ChEBI" id="CHEBI:71302"/>
    </cofactor>
    <text evidence="1">Binds 1 Mo-molybdopterin (Mo-MPT) cofactor per subunit.</text>
</comment>
<comment type="subunit">
    <text evidence="4">Homodimer.</text>
</comment>
<comment type="subcellular location">
    <subcellularLocation>
        <location evidence="4">Cytoplasm</location>
    </subcellularLocation>
</comment>
<comment type="miscellaneous">
    <text evidence="7">AOX genes evolved from a xanthine oxidoreductase ancestral precursor via a series of gene duplication and suppression/deletion events. Different animal species contain a different complement of AOX genes encoding an equivalent number of AOX isoenzymes. In mammals, the two extremes are represented by certain rodents such as mice and rats, which are endowed with 4 AOX genes, and by humans, whose genome is characterized by a single active gene (PubMed:23263164).</text>
</comment>
<comment type="similarity">
    <text evidence="6">Belongs to the xanthine dehydrogenase family.</text>
</comment>
<comment type="caution">
    <text evidence="6">The experimental design does not allow to distinguish AOX1 from AOX3 in rat liver as the effector of the superoxide and nitric oxide production (PubMed:17353002, PubMed:19801639).</text>
</comment>
<feature type="chain" id="PRO_0000425248" description="Aldehyde oxidase 3">
    <location>
        <begin position="1"/>
        <end position="1334"/>
    </location>
</feature>
<feature type="domain" description="2Fe-2S ferredoxin-type" evidence="2">
    <location>
        <begin position="8"/>
        <end position="95"/>
    </location>
</feature>
<feature type="domain" description="FAD-binding PCMH-type" evidence="3">
    <location>
        <begin position="236"/>
        <end position="421"/>
    </location>
</feature>
<feature type="active site" description="Proton acceptor; for azaheterocycle hydroxylase activity" evidence="1">
    <location>
        <position position="1265"/>
    </location>
</feature>
<feature type="binding site" evidence="1">
    <location>
        <position position="47"/>
    </location>
    <ligand>
        <name>[2Fe-2S] cluster</name>
        <dbReference type="ChEBI" id="CHEBI:190135"/>
        <label>1</label>
    </ligand>
</feature>
<feature type="binding site" evidence="1">
    <location>
        <position position="52"/>
    </location>
    <ligand>
        <name>[2Fe-2S] cluster</name>
        <dbReference type="ChEBI" id="CHEBI:190135"/>
        <label>1</label>
    </ligand>
</feature>
<feature type="binding site" evidence="1">
    <location>
        <position position="55"/>
    </location>
    <ligand>
        <name>[2Fe-2S] cluster</name>
        <dbReference type="ChEBI" id="CHEBI:190135"/>
        <label>1</label>
    </ligand>
</feature>
<feature type="binding site" evidence="1">
    <location>
        <position position="77"/>
    </location>
    <ligand>
        <name>[2Fe-2S] cluster</name>
        <dbReference type="ChEBI" id="CHEBI:190135"/>
        <label>1</label>
    </ligand>
</feature>
<feature type="binding site" evidence="1">
    <location>
        <position position="116"/>
    </location>
    <ligand>
        <name>Mo-molybdopterin</name>
        <dbReference type="ChEBI" id="CHEBI:71302"/>
    </ligand>
</feature>
<feature type="binding site" evidence="1">
    <location>
        <position position="117"/>
    </location>
    <ligand>
        <name>[2Fe-2S] cluster</name>
        <dbReference type="ChEBI" id="CHEBI:190135"/>
        <label>2</label>
    </ligand>
</feature>
<feature type="binding site" evidence="1">
    <location>
        <position position="120"/>
    </location>
    <ligand>
        <name>[2Fe-2S] cluster</name>
        <dbReference type="ChEBI" id="CHEBI:190135"/>
        <label>2</label>
    </ligand>
</feature>
<feature type="binding site" evidence="1">
    <location>
        <position position="152"/>
    </location>
    <ligand>
        <name>[2Fe-2S] cluster</name>
        <dbReference type="ChEBI" id="CHEBI:190135"/>
        <label>2</label>
    </ligand>
</feature>
<feature type="binding site" evidence="1">
    <location>
        <position position="154"/>
    </location>
    <ligand>
        <name>[2Fe-2S] cluster</name>
        <dbReference type="ChEBI" id="CHEBI:190135"/>
        <label>2</label>
    </ligand>
</feature>
<feature type="binding site" evidence="1">
    <location>
        <begin position="264"/>
        <end position="271"/>
    </location>
    <ligand>
        <name>FAD</name>
        <dbReference type="ChEBI" id="CHEBI:57692"/>
    </ligand>
</feature>
<feature type="binding site" evidence="1">
    <location>
        <position position="354"/>
    </location>
    <ligand>
        <name>FAD</name>
        <dbReference type="ChEBI" id="CHEBI:57692"/>
    </ligand>
</feature>
<feature type="binding site" evidence="1">
    <location>
        <position position="358"/>
    </location>
    <ligand>
        <name>FAD</name>
        <dbReference type="ChEBI" id="CHEBI:57692"/>
    </ligand>
</feature>
<feature type="binding site" evidence="1">
    <location>
        <position position="367"/>
    </location>
    <ligand>
        <name>FAD</name>
        <dbReference type="ChEBI" id="CHEBI:57692"/>
    </ligand>
</feature>
<feature type="binding site" evidence="1">
    <location>
        <position position="411"/>
    </location>
    <ligand>
        <name>FAD</name>
        <dbReference type="ChEBI" id="CHEBI:57692"/>
    </ligand>
</feature>
<feature type="binding site" evidence="1">
    <location>
        <position position="801"/>
    </location>
    <ligand>
        <name>Mo-molybdopterin</name>
        <dbReference type="ChEBI" id="CHEBI:71302"/>
    </ligand>
</feature>
<feature type="binding site" evidence="1">
    <location>
        <position position="1042"/>
    </location>
    <ligand>
        <name>Mo-molybdopterin</name>
        <dbReference type="ChEBI" id="CHEBI:71302"/>
    </ligand>
</feature>
<feature type="binding site" evidence="1">
    <location>
        <position position="1198"/>
    </location>
    <ligand>
        <name>Mo-molybdopterin</name>
        <dbReference type="ChEBI" id="CHEBI:71302"/>
    </ligand>
</feature>
<feature type="modified residue" description="Phosphoserine" evidence="8">
    <location>
        <position position="320"/>
    </location>
</feature>